<accession>P11072</accession>
<accession>P77283</accession>
<name>LIT_ECOLI</name>
<reference key="1">
    <citation type="journal article" date="1988" name="J. Bacteriol.">
        <title>The lit gene product which blocks bacteriophage T4 late gene expression is a membrane protein encoded by a cryptic DNA element, e14.</title>
        <authorList>
            <person name="Kao C."/>
            <person name="Snyder L."/>
        </authorList>
    </citation>
    <scope>NUCLEOTIDE SEQUENCE [GENOMIC DNA]</scope>
    <source>
        <strain>K12 / JM101 / ATCC 33876 / DSM 3948 / NCIMB 11926</strain>
    </source>
</reference>
<reference key="2">
    <citation type="journal article" date="1996" name="DNA Res.">
        <title>A 718-kb DNA sequence of the Escherichia coli K-12 genome corresponding to the 12.7-28.0 min region on the linkage map.</title>
        <authorList>
            <person name="Oshima T."/>
            <person name="Aiba H."/>
            <person name="Baba T."/>
            <person name="Fujita K."/>
            <person name="Hayashi K."/>
            <person name="Honjo A."/>
            <person name="Ikemoto K."/>
            <person name="Inada T."/>
            <person name="Itoh T."/>
            <person name="Kajihara M."/>
            <person name="Kanai K."/>
            <person name="Kashimoto K."/>
            <person name="Kimura S."/>
            <person name="Kitagawa M."/>
            <person name="Makino K."/>
            <person name="Masuda S."/>
            <person name="Miki T."/>
            <person name="Mizobuchi K."/>
            <person name="Mori H."/>
            <person name="Motomura K."/>
            <person name="Nakamura Y."/>
            <person name="Nashimoto H."/>
            <person name="Nishio Y."/>
            <person name="Saito N."/>
            <person name="Sampei G."/>
            <person name="Seki Y."/>
            <person name="Tagami H."/>
            <person name="Takemoto K."/>
            <person name="Wada C."/>
            <person name="Yamamoto Y."/>
            <person name="Yano M."/>
            <person name="Horiuchi T."/>
        </authorList>
    </citation>
    <scope>NUCLEOTIDE SEQUENCE [LARGE SCALE GENOMIC DNA]</scope>
    <source>
        <strain>K12 / W3110 / ATCC 27325 / DSM 5911</strain>
    </source>
</reference>
<reference key="3">
    <citation type="journal article" date="1997" name="Science">
        <title>The complete genome sequence of Escherichia coli K-12.</title>
        <authorList>
            <person name="Blattner F.R."/>
            <person name="Plunkett G. III"/>
            <person name="Bloch C.A."/>
            <person name="Perna N.T."/>
            <person name="Burland V."/>
            <person name="Riley M."/>
            <person name="Collado-Vides J."/>
            <person name="Glasner J.D."/>
            <person name="Rode C.K."/>
            <person name="Mayhew G.F."/>
            <person name="Gregor J."/>
            <person name="Davis N.W."/>
            <person name="Kirkpatrick H.A."/>
            <person name="Goeden M.A."/>
            <person name="Rose D.J."/>
            <person name="Mau B."/>
            <person name="Shao Y."/>
        </authorList>
    </citation>
    <scope>NUCLEOTIDE SEQUENCE [LARGE SCALE GENOMIC DNA]</scope>
    <source>
        <strain>K12 / MG1655 / ATCC 47076</strain>
    </source>
</reference>
<reference key="4">
    <citation type="journal article" date="2006" name="Mol. Syst. Biol.">
        <title>Highly accurate genome sequences of Escherichia coli K-12 strains MG1655 and W3110.</title>
        <authorList>
            <person name="Hayashi K."/>
            <person name="Morooka N."/>
            <person name="Yamamoto Y."/>
            <person name="Fujita K."/>
            <person name="Isono K."/>
            <person name="Choi S."/>
            <person name="Ohtsubo E."/>
            <person name="Baba T."/>
            <person name="Wanner B.L."/>
            <person name="Mori H."/>
            <person name="Horiuchi T."/>
        </authorList>
    </citation>
    <scope>NUCLEOTIDE SEQUENCE [LARGE SCALE GENOMIC DNA]</scope>
    <source>
        <strain>K12 / W3110 / ATCC 27325 / DSM 5911</strain>
    </source>
</reference>
<protein>
    <recommendedName>
        <fullName evidence="3">Cell death peptidase</fullName>
    </recommendedName>
    <alternativeName>
        <fullName>Bacteriophage T4 late gene expression-blocking protein</fullName>
    </alternativeName>
    <alternativeName>
        <fullName>GpLit</fullName>
    </alternativeName>
</protein>
<dbReference type="EMBL" id="M19634">
    <property type="protein sequence ID" value="AAA24074.1"/>
    <property type="molecule type" value="Genomic_DNA"/>
</dbReference>
<dbReference type="EMBL" id="U00096">
    <property type="protein sequence ID" value="AAC74223.1"/>
    <property type="molecule type" value="Genomic_DNA"/>
</dbReference>
<dbReference type="EMBL" id="AP009048">
    <property type="protein sequence ID" value="BAA35968.1"/>
    <property type="molecule type" value="Genomic_DNA"/>
</dbReference>
<dbReference type="PIR" id="H64858">
    <property type="entry name" value="BVECLT"/>
</dbReference>
<dbReference type="RefSeq" id="NP_415657.1">
    <property type="nucleotide sequence ID" value="NC_000913.3"/>
</dbReference>
<dbReference type="RefSeq" id="WP_001257372.1">
    <property type="nucleotide sequence ID" value="NZ_CP064683.1"/>
</dbReference>
<dbReference type="BioGRID" id="4263099">
    <property type="interactions" value="10"/>
</dbReference>
<dbReference type="FunCoup" id="P11072">
    <property type="interactions" value="2"/>
</dbReference>
<dbReference type="STRING" id="511145.b1139"/>
<dbReference type="MEROPS" id="U49.001"/>
<dbReference type="PaxDb" id="511145-b1139"/>
<dbReference type="EnsemblBacteria" id="AAC74223">
    <property type="protein sequence ID" value="AAC74223"/>
    <property type="gene ID" value="b1139"/>
</dbReference>
<dbReference type="GeneID" id="948421"/>
<dbReference type="KEGG" id="ecj:JW1125"/>
<dbReference type="KEGG" id="eco:b1139"/>
<dbReference type="PATRIC" id="fig|511145.12.peg.1185"/>
<dbReference type="EchoBASE" id="EB0530"/>
<dbReference type="eggNOG" id="ENOG5033IJV">
    <property type="taxonomic scope" value="Bacteria"/>
</dbReference>
<dbReference type="HOGENOM" id="CLU_979143_0_0_6"/>
<dbReference type="InParanoid" id="P11072"/>
<dbReference type="OMA" id="WIIWHEI"/>
<dbReference type="BioCyc" id="EcoCyc:EG10535-MONOMER"/>
<dbReference type="PRO" id="PR:P11072"/>
<dbReference type="Proteomes" id="UP000000625">
    <property type="component" value="Chromosome"/>
</dbReference>
<dbReference type="GO" id="GO:0005886">
    <property type="term" value="C:plasma membrane"/>
    <property type="evidence" value="ECO:0007669"/>
    <property type="project" value="UniProtKB-SubCell"/>
</dbReference>
<dbReference type="GO" id="GO:0008233">
    <property type="term" value="F:peptidase activity"/>
    <property type="evidence" value="ECO:0000314"/>
    <property type="project" value="EcoCyc"/>
</dbReference>
<dbReference type="GO" id="GO:0006508">
    <property type="term" value="P:proteolysis"/>
    <property type="evidence" value="ECO:0007669"/>
    <property type="project" value="UniProtKB-KW"/>
</dbReference>
<dbReference type="GO" id="GO:0006448">
    <property type="term" value="P:regulation of translational elongation"/>
    <property type="evidence" value="ECO:0000314"/>
    <property type="project" value="EcoCyc"/>
</dbReference>
<dbReference type="InterPro" id="IPR019504">
    <property type="entry name" value="Peptidase_U49_Lit_pept"/>
</dbReference>
<dbReference type="NCBIfam" id="NF007238">
    <property type="entry name" value="PRK09672.1"/>
    <property type="match status" value="1"/>
</dbReference>
<dbReference type="Pfam" id="PF10463">
    <property type="entry name" value="Peptidase_U49"/>
    <property type="match status" value="1"/>
</dbReference>
<sequence length="297" mass="33762">MRSPICHLFSAINSSPFKIAPEKEQDLKTIVDDKKIIISVVSEPGFNIRVRKNESNNSHEIVLTVASLEYIWAFSNFFWVFTQEYSKSQKNNDEHFDLTGKNRLKKSDELLKWARKNLQTTGCESWPKKCPKPEAYLQGSEDSQVASEIFLCAIAWILHHEISHVVLQHPLVTTAFSTQEEREADSHATKWILGNLYESAPELKKRALGIATAVLCIQSLEVENYFCLQNTHPAAYERIYSNISCYPVGNEELIEALCTVMLQYLFHGKNINVNLDGESFSSILGDLLCDISRLTSN</sequence>
<comment type="function">
    <text evidence="2">Interacts with a short DNA sequence about one-quarter of the way into the major capsid protein gene 23 of T4; general translation inhibition occurs when this late gene of the virus is expressed.</text>
</comment>
<comment type="subcellular location">
    <subcellularLocation>
        <location evidence="3">Cell membrane</location>
        <topology evidence="3">Multi-pass membrane protein</topology>
    </subcellularLocation>
</comment>
<comment type="similarity">
    <text evidence="3">Belongs to the peptidase U49 family.</text>
</comment>
<gene>
    <name type="primary">lit</name>
    <name type="ordered locus">b1139</name>
    <name type="ordered locus">JW1125</name>
</gene>
<evidence type="ECO:0000255" key="1"/>
<evidence type="ECO:0000269" key="2">
    <source>
    </source>
</evidence>
<evidence type="ECO:0000305" key="3"/>
<keyword id="KW-1003">Cell membrane</keyword>
<keyword id="KW-0378">Hydrolase</keyword>
<keyword id="KW-0472">Membrane</keyword>
<keyword id="KW-0645">Protease</keyword>
<keyword id="KW-1185">Reference proteome</keyword>
<keyword id="KW-0812">Transmembrane</keyword>
<keyword id="KW-1133">Transmembrane helix</keyword>
<organism>
    <name type="scientific">Escherichia coli (strain K12)</name>
    <dbReference type="NCBI Taxonomy" id="83333"/>
    <lineage>
        <taxon>Bacteria</taxon>
        <taxon>Pseudomonadati</taxon>
        <taxon>Pseudomonadota</taxon>
        <taxon>Gammaproteobacteria</taxon>
        <taxon>Enterobacterales</taxon>
        <taxon>Enterobacteriaceae</taxon>
        <taxon>Escherichia</taxon>
    </lineage>
</organism>
<feature type="chain" id="PRO_0000084446" description="Cell death peptidase">
    <location>
        <begin position="1"/>
        <end position="297"/>
    </location>
</feature>
<feature type="transmembrane region" description="Helical" evidence="1">
    <location>
        <begin position="61"/>
        <end position="82"/>
    </location>
</feature>
<feature type="transmembrane region" description="Helical" evidence="1">
    <location>
        <begin position="149"/>
        <end position="178"/>
    </location>
</feature>
<feature type="sequence conflict" description="In Ref. 1; AAA24074." evidence="3" ref="1">
    <original>TGCESWPKKCPKPEA</original>
    <variation>QVANHGLKNVPSQKH</variation>
    <location>
        <begin position="121"/>
        <end position="135"/>
    </location>
</feature>
<proteinExistence type="inferred from homology"/>